<gene>
    <name type="primary">yceB</name>
    <name type="ordered locus">b1063</name>
    <name type="ordered locus">JW1050</name>
</gene>
<name>YCEB_ECOLI</name>
<reference key="1">
    <citation type="journal article" date="1986" name="Eur. J. Biochem.">
        <title>Nucleotide sequence of the structural gene for dihydroorotase of Escherichia coli K12.</title>
        <authorList>
            <person name="Baeckstroem D."/>
            <person name="Sjoeberg R.-M."/>
            <person name="Lundberg L.G."/>
        </authorList>
    </citation>
    <scope>NUCLEOTIDE SEQUENCE [GENOMIC DNA]</scope>
    <source>
        <strain>K12</strain>
    </source>
</reference>
<reference key="2">
    <citation type="journal article" date="1996" name="DNA Res.">
        <title>A 718-kb DNA sequence of the Escherichia coli K-12 genome corresponding to the 12.7-28.0 min region on the linkage map.</title>
        <authorList>
            <person name="Oshima T."/>
            <person name="Aiba H."/>
            <person name="Baba T."/>
            <person name="Fujita K."/>
            <person name="Hayashi K."/>
            <person name="Honjo A."/>
            <person name="Ikemoto K."/>
            <person name="Inada T."/>
            <person name="Itoh T."/>
            <person name="Kajihara M."/>
            <person name="Kanai K."/>
            <person name="Kashimoto K."/>
            <person name="Kimura S."/>
            <person name="Kitagawa M."/>
            <person name="Makino K."/>
            <person name="Masuda S."/>
            <person name="Miki T."/>
            <person name="Mizobuchi K."/>
            <person name="Mori H."/>
            <person name="Motomura K."/>
            <person name="Nakamura Y."/>
            <person name="Nashimoto H."/>
            <person name="Nishio Y."/>
            <person name="Saito N."/>
            <person name="Sampei G."/>
            <person name="Seki Y."/>
            <person name="Tagami H."/>
            <person name="Takemoto K."/>
            <person name="Wada C."/>
            <person name="Yamamoto Y."/>
            <person name="Yano M."/>
            <person name="Horiuchi T."/>
        </authorList>
    </citation>
    <scope>NUCLEOTIDE SEQUENCE [LARGE SCALE GENOMIC DNA]</scope>
    <source>
        <strain>K12 / W3110 / ATCC 27325 / DSM 5911</strain>
    </source>
</reference>
<reference key="3">
    <citation type="journal article" date="1997" name="Science">
        <title>The complete genome sequence of Escherichia coli K-12.</title>
        <authorList>
            <person name="Blattner F.R."/>
            <person name="Plunkett G. III"/>
            <person name="Bloch C.A."/>
            <person name="Perna N.T."/>
            <person name="Burland V."/>
            <person name="Riley M."/>
            <person name="Collado-Vides J."/>
            <person name="Glasner J.D."/>
            <person name="Rode C.K."/>
            <person name="Mayhew G.F."/>
            <person name="Gregor J."/>
            <person name="Davis N.W."/>
            <person name="Kirkpatrick H.A."/>
            <person name="Goeden M.A."/>
            <person name="Rose D.J."/>
            <person name="Mau B."/>
            <person name="Shao Y."/>
        </authorList>
    </citation>
    <scope>NUCLEOTIDE SEQUENCE [LARGE SCALE GENOMIC DNA]</scope>
    <source>
        <strain>K12 / MG1655 / ATCC 47076</strain>
    </source>
</reference>
<reference key="4">
    <citation type="journal article" date="2006" name="Mol. Syst. Biol.">
        <title>Highly accurate genome sequences of Escherichia coli K-12 strains MG1655 and W3110.</title>
        <authorList>
            <person name="Hayashi K."/>
            <person name="Morooka N."/>
            <person name="Yamamoto Y."/>
            <person name="Fujita K."/>
            <person name="Isono K."/>
            <person name="Choi S."/>
            <person name="Ohtsubo E."/>
            <person name="Baba T."/>
            <person name="Wanner B.L."/>
            <person name="Mori H."/>
            <person name="Horiuchi T."/>
        </authorList>
    </citation>
    <scope>NUCLEOTIDE SEQUENCE [LARGE SCALE GENOMIC DNA]</scope>
    <source>
        <strain>K12 / W3110 / ATCC 27325 / DSM 5911</strain>
    </source>
</reference>
<comment type="subcellular location">
    <subcellularLocation>
        <location evidence="1">Cell membrane</location>
        <topology evidence="1">Lipid-anchor</topology>
    </subcellularLocation>
</comment>
<protein>
    <recommendedName>
        <fullName>Uncharacterized lipoprotein YceB</fullName>
    </recommendedName>
</protein>
<accession>P0AB26</accession>
<accession>P09995</accession>
<proteinExistence type="evidence at protein level"/>
<evidence type="ECO:0000255" key="1">
    <source>
        <dbReference type="PROSITE-ProRule" id="PRU00303"/>
    </source>
</evidence>
<evidence type="ECO:0007829" key="2">
    <source>
        <dbReference type="PDB" id="3L6I"/>
    </source>
</evidence>
<feature type="signal peptide" evidence="1">
    <location>
        <begin position="1"/>
        <end position="18"/>
    </location>
</feature>
<feature type="chain" id="PRO_0000013822" description="Uncharacterized lipoprotein YceB">
    <location>
        <begin position="19"/>
        <end position="186"/>
    </location>
</feature>
<feature type="lipid moiety-binding region" description="N-palmitoyl cysteine" evidence="1">
    <location>
        <position position="19"/>
    </location>
</feature>
<feature type="lipid moiety-binding region" description="S-diacylglycerol cysteine" evidence="1">
    <location>
        <position position="19"/>
    </location>
</feature>
<feature type="strand" evidence="2">
    <location>
        <begin position="22"/>
        <end position="28"/>
    </location>
</feature>
<feature type="helix" evidence="2">
    <location>
        <begin position="29"/>
        <end position="39"/>
    </location>
</feature>
<feature type="strand" evidence="2">
    <location>
        <begin position="43"/>
        <end position="48"/>
    </location>
</feature>
<feature type="turn" evidence="2">
    <location>
        <begin position="49"/>
        <end position="51"/>
    </location>
</feature>
<feature type="strand" evidence="2">
    <location>
        <begin position="52"/>
        <end position="69"/>
    </location>
</feature>
<feature type="strand" evidence="2">
    <location>
        <begin position="73"/>
        <end position="85"/>
    </location>
</feature>
<feature type="strand" evidence="2">
    <location>
        <begin position="88"/>
        <end position="105"/>
    </location>
</feature>
<feature type="turn" evidence="2">
    <location>
        <begin position="106"/>
        <end position="109"/>
    </location>
</feature>
<feature type="strand" evidence="2">
    <location>
        <begin position="110"/>
        <end position="125"/>
    </location>
</feature>
<feature type="helix" evidence="2">
    <location>
        <begin position="127"/>
        <end position="149"/>
    </location>
</feature>
<feature type="strand" evidence="2">
    <location>
        <begin position="152"/>
        <end position="154"/>
    </location>
</feature>
<feature type="strand" evidence="2">
    <location>
        <begin position="157"/>
        <end position="159"/>
    </location>
</feature>
<feature type="helix" evidence="2">
    <location>
        <begin position="161"/>
        <end position="169"/>
    </location>
</feature>
<feature type="strand" evidence="2">
    <location>
        <begin position="174"/>
        <end position="176"/>
    </location>
</feature>
<feature type="strand" evidence="2">
    <location>
        <begin position="179"/>
        <end position="183"/>
    </location>
</feature>
<keyword id="KW-0002">3D-structure</keyword>
<keyword id="KW-1003">Cell membrane</keyword>
<keyword id="KW-0449">Lipoprotein</keyword>
<keyword id="KW-0472">Membrane</keyword>
<keyword id="KW-0564">Palmitate</keyword>
<keyword id="KW-1185">Reference proteome</keyword>
<keyword id="KW-0732">Signal</keyword>
<sequence length="186" mass="20500">MNKFLFAAALIVSGLLVGCNQLTQYTITEQEINQSLAKHNNFSKDIGLPGVADAHIVLTNLTSQIGREEPNKVTLTGDANLDMNSLFGSQKATMKLKLKALPVFDKEKGAIFLKEMEVVDATVQPEKMQTVMQTLLPYLNQALRNYFNQQPAYVLREDGSQGEAMAKKLAKGIEVKPGEIVIPFTD</sequence>
<dbReference type="EMBL" id="X04469">
    <property type="protein sequence ID" value="CAA28156.1"/>
    <property type="molecule type" value="Genomic_DNA"/>
</dbReference>
<dbReference type="EMBL" id="U00096">
    <property type="protein sequence ID" value="AAC74147.1"/>
    <property type="molecule type" value="Genomic_DNA"/>
</dbReference>
<dbReference type="EMBL" id="AP009048">
    <property type="protein sequence ID" value="BAA35871.1"/>
    <property type="molecule type" value="Genomic_DNA"/>
</dbReference>
<dbReference type="PIR" id="B25008">
    <property type="entry name" value="QQECP5"/>
</dbReference>
<dbReference type="RefSeq" id="NP_415581.1">
    <property type="nucleotide sequence ID" value="NC_000913.3"/>
</dbReference>
<dbReference type="RefSeq" id="WP_001295443.1">
    <property type="nucleotide sequence ID" value="NZ_STEB01000016.1"/>
</dbReference>
<dbReference type="PDB" id="3L6I">
    <property type="method" value="X-ray"/>
    <property type="resolution" value="2.01 A"/>
    <property type="chains" value="A/B=20-186"/>
</dbReference>
<dbReference type="PDBsum" id="3L6I"/>
<dbReference type="SMR" id="P0AB26"/>
<dbReference type="BioGRID" id="4261688">
    <property type="interactions" value="119"/>
</dbReference>
<dbReference type="FunCoup" id="P0AB26">
    <property type="interactions" value="84"/>
</dbReference>
<dbReference type="IntAct" id="P0AB26">
    <property type="interactions" value="1"/>
</dbReference>
<dbReference type="STRING" id="511145.b1063"/>
<dbReference type="jPOST" id="P0AB26"/>
<dbReference type="PaxDb" id="511145-b1063"/>
<dbReference type="EnsemblBacteria" id="AAC74147">
    <property type="protein sequence ID" value="AAC74147"/>
    <property type="gene ID" value="b1063"/>
</dbReference>
<dbReference type="GeneID" id="947377"/>
<dbReference type="KEGG" id="ecj:JW1050"/>
<dbReference type="KEGG" id="eco:b1063"/>
<dbReference type="KEGG" id="ecoc:C3026_06460"/>
<dbReference type="PATRIC" id="fig|1411691.4.peg.1205"/>
<dbReference type="EchoBASE" id="EB1107"/>
<dbReference type="eggNOG" id="ENOG502Z7KF">
    <property type="taxonomic scope" value="Bacteria"/>
</dbReference>
<dbReference type="HOGENOM" id="CLU_105009_0_0_6"/>
<dbReference type="InParanoid" id="P0AB26"/>
<dbReference type="OMA" id="HNDYQKQ"/>
<dbReference type="OrthoDB" id="5688063at2"/>
<dbReference type="PhylomeDB" id="P0AB26"/>
<dbReference type="BioCyc" id="EcoCyc:EG11117-MONOMER"/>
<dbReference type="EvolutionaryTrace" id="P0AB26"/>
<dbReference type="PRO" id="PR:P0AB26"/>
<dbReference type="Proteomes" id="UP000000625">
    <property type="component" value="Chromosome"/>
</dbReference>
<dbReference type="GO" id="GO:0005886">
    <property type="term" value="C:plasma membrane"/>
    <property type="evidence" value="ECO:0007669"/>
    <property type="project" value="UniProtKB-SubCell"/>
</dbReference>
<dbReference type="Gene3D" id="3.15.10.40">
    <property type="entry name" value="Uncharacterised protein PF07273, DUF1439"/>
    <property type="match status" value="1"/>
</dbReference>
<dbReference type="InterPro" id="IPR010835">
    <property type="entry name" value="DUF1439"/>
</dbReference>
<dbReference type="NCBIfam" id="NF007894">
    <property type="entry name" value="PRK10598.1"/>
    <property type="match status" value="1"/>
</dbReference>
<dbReference type="Pfam" id="PF07273">
    <property type="entry name" value="DUF1439"/>
    <property type="match status" value="1"/>
</dbReference>
<dbReference type="PROSITE" id="PS51257">
    <property type="entry name" value="PROKAR_LIPOPROTEIN"/>
    <property type="match status" value="1"/>
</dbReference>
<organism>
    <name type="scientific">Escherichia coli (strain K12)</name>
    <dbReference type="NCBI Taxonomy" id="83333"/>
    <lineage>
        <taxon>Bacteria</taxon>
        <taxon>Pseudomonadati</taxon>
        <taxon>Pseudomonadota</taxon>
        <taxon>Gammaproteobacteria</taxon>
        <taxon>Enterobacterales</taxon>
        <taxon>Enterobacteriaceae</taxon>
        <taxon>Escherichia</taxon>
    </lineage>
</organism>